<keyword id="KW-0158">Chromosome</keyword>
<keyword id="KW-0963">Cytoplasm</keyword>
<keyword id="KW-0489">Methyltransferase</keyword>
<keyword id="KW-0539">Nucleus</keyword>
<keyword id="KW-0597">Phosphoprotein</keyword>
<keyword id="KW-0949">S-adenosyl-L-methionine</keyword>
<keyword id="KW-0808">Transferase</keyword>
<dbReference type="EC" id="2.1.1.-" evidence="1"/>
<dbReference type="EMBL" id="AAFW02000082">
    <property type="protein sequence ID" value="EDN62445.1"/>
    <property type="molecule type" value="Genomic_DNA"/>
</dbReference>
<dbReference type="HOGENOM" id="CLU_031650_0_0_1"/>
<dbReference type="Proteomes" id="UP000007060">
    <property type="component" value="Unassembled WGS sequence"/>
</dbReference>
<dbReference type="GO" id="GO:0005694">
    <property type="term" value="C:chromosome"/>
    <property type="evidence" value="ECO:0007669"/>
    <property type="project" value="UniProtKB-SubCell"/>
</dbReference>
<dbReference type="GO" id="GO:0005737">
    <property type="term" value="C:cytoplasm"/>
    <property type="evidence" value="ECO:0007669"/>
    <property type="project" value="UniProtKB-SubCell"/>
</dbReference>
<dbReference type="GO" id="GO:0005634">
    <property type="term" value="C:nucleus"/>
    <property type="evidence" value="ECO:0007669"/>
    <property type="project" value="UniProtKB-SubCell"/>
</dbReference>
<dbReference type="GO" id="GO:0042799">
    <property type="term" value="F:histone H4K20 methyltransferase activity"/>
    <property type="evidence" value="ECO:0007669"/>
    <property type="project" value="TreeGrafter"/>
</dbReference>
<dbReference type="GO" id="GO:0032259">
    <property type="term" value="P:methylation"/>
    <property type="evidence" value="ECO:0007669"/>
    <property type="project" value="UniProtKB-KW"/>
</dbReference>
<dbReference type="GO" id="GO:0045814">
    <property type="term" value="P:negative regulation of gene expression, epigenetic"/>
    <property type="evidence" value="ECO:0007669"/>
    <property type="project" value="TreeGrafter"/>
</dbReference>
<dbReference type="CDD" id="cd20071">
    <property type="entry name" value="SET_SMYD"/>
    <property type="match status" value="1"/>
</dbReference>
<dbReference type="Gene3D" id="1.10.220.160">
    <property type="match status" value="1"/>
</dbReference>
<dbReference type="Gene3D" id="6.10.140.2220">
    <property type="match status" value="1"/>
</dbReference>
<dbReference type="Gene3D" id="2.170.270.10">
    <property type="entry name" value="SET domain"/>
    <property type="match status" value="1"/>
</dbReference>
<dbReference type="InterPro" id="IPR001214">
    <property type="entry name" value="SET_dom"/>
</dbReference>
<dbReference type="InterPro" id="IPR046341">
    <property type="entry name" value="SET_dom_sf"/>
</dbReference>
<dbReference type="PANTHER" id="PTHR46402:SF2">
    <property type="entry name" value="HISTONE-LYSINE N-TRIMETHYLTRANSFERASE SMYD5"/>
    <property type="match status" value="1"/>
</dbReference>
<dbReference type="PANTHER" id="PTHR46402">
    <property type="entry name" value="SET AND MYND DOMAIN-CONTAINING PROTEIN 5"/>
    <property type="match status" value="1"/>
</dbReference>
<dbReference type="Pfam" id="PF00856">
    <property type="entry name" value="SET"/>
    <property type="match status" value="2"/>
</dbReference>
<dbReference type="SMART" id="SM00317">
    <property type="entry name" value="SET"/>
    <property type="match status" value="1"/>
</dbReference>
<dbReference type="SUPFAM" id="SSF82199">
    <property type="entry name" value="SET domain"/>
    <property type="match status" value="1"/>
</dbReference>
<dbReference type="PROSITE" id="PS50280">
    <property type="entry name" value="SET"/>
    <property type="match status" value="1"/>
</dbReference>
<proteinExistence type="inferred from homology"/>
<sequence length="526" mass="60574">MTLTIKIGTLNDSDQSAVHNGTENGSDFRKITPTEEEICDDVVLLWKEEPGTEDATIQHLYDRITERNQSWKLSASRFRKILNEHHLYDTDLETVSLYKDKIHFPKALDSDAKVEVKFIDDEHGRGLFAKRDFSKGQIILKENKPIVYIPPLDKLFLISNGKACARCGKALYDLTQHKIMVHYLDCEVCKAIWCSEKCKKAHASLHELLYHSWRSNRIDILHAGNWKRFVNYCEKYCFTAAFSVGLIYGSMLLDTTGEVKEQWQKLASISQRERIKLRDASGIGSTFSLLNGTTVHTEEESDNGTKKGVEKNIDDETVWEKCYELFCGAFPKASEEIDFEKFLTMIGTFNINQYNGQVYHWISFINHDCEPNAYIEQVEEHEELRLHARKPIKKGEQIRITYVNPLHGVRLRRRELRVNWGFLCQCDRCQNELSTFERVPNLEKKNADANLGVEKIDSNDNSEDGSKKSTGNRKSSMREAQPDLKEILKNGKEFELDIPETVDTQGNVRKTSVRFDSNVSVAVDER</sequence>
<evidence type="ECO:0000250" key="1">
    <source>
        <dbReference type="UniProtKB" id="P38890"/>
    </source>
</evidence>
<evidence type="ECO:0000255" key="2">
    <source>
        <dbReference type="PROSITE-ProRule" id="PRU00190"/>
    </source>
</evidence>
<evidence type="ECO:0000256" key="3">
    <source>
        <dbReference type="SAM" id="MobiDB-lite"/>
    </source>
</evidence>
<protein>
    <recommendedName>
        <fullName>Histone-lysine N-methyltransferase SET5</fullName>
        <ecNumber evidence="1">2.1.1.-</ecNumber>
    </recommendedName>
    <alternativeName>
        <fullName>SET domain-containing protein 5</fullName>
    </alternativeName>
</protein>
<organism>
    <name type="scientific">Saccharomyces cerevisiae (strain YJM789)</name>
    <name type="common">Baker's yeast</name>
    <dbReference type="NCBI Taxonomy" id="307796"/>
    <lineage>
        <taxon>Eukaryota</taxon>
        <taxon>Fungi</taxon>
        <taxon>Dikarya</taxon>
        <taxon>Ascomycota</taxon>
        <taxon>Saccharomycotina</taxon>
        <taxon>Saccharomycetes</taxon>
        <taxon>Saccharomycetales</taxon>
        <taxon>Saccharomycetaceae</taxon>
        <taxon>Saccharomyces</taxon>
    </lineage>
</organism>
<feature type="chain" id="PRO_0000324475" description="Histone-lysine N-methyltransferase SET5">
    <location>
        <begin position="1"/>
        <end position="526"/>
    </location>
</feature>
<feature type="domain" description="SET" evidence="2">
    <location>
        <begin position="112"/>
        <end position="403"/>
    </location>
</feature>
<feature type="region of interest" description="Disordered" evidence="3">
    <location>
        <begin position="450"/>
        <end position="492"/>
    </location>
</feature>
<feature type="compositionally biased region" description="Basic and acidic residues" evidence="3">
    <location>
        <begin position="476"/>
        <end position="492"/>
    </location>
</feature>
<feature type="modified residue" description="Phosphoserine" evidence="1">
    <location>
        <position position="517"/>
    </location>
</feature>
<gene>
    <name type="primary">SET5</name>
    <name type="ORF">SCY_2598</name>
</gene>
<reference key="1">
    <citation type="journal article" date="2007" name="Proc. Natl. Acad. Sci. U.S.A.">
        <title>Genome sequencing and comparative analysis of Saccharomyces cerevisiae strain YJM789.</title>
        <authorList>
            <person name="Wei W."/>
            <person name="McCusker J.H."/>
            <person name="Hyman R.W."/>
            <person name="Jones T."/>
            <person name="Ning Y."/>
            <person name="Cao Z."/>
            <person name="Gu Z."/>
            <person name="Bruno D."/>
            <person name="Miranda M."/>
            <person name="Nguyen M."/>
            <person name="Wilhelmy J."/>
            <person name="Komp C."/>
            <person name="Tamse R."/>
            <person name="Wang X."/>
            <person name="Jia P."/>
            <person name="Luedi P."/>
            <person name="Oefner P.J."/>
            <person name="David L."/>
            <person name="Dietrich F.S."/>
            <person name="Li Y."/>
            <person name="Davis R.W."/>
            <person name="Steinmetz L.M."/>
        </authorList>
    </citation>
    <scope>NUCLEOTIDE SEQUENCE [LARGE SCALE GENOMIC DNA]</scope>
    <source>
        <strain>YJM789</strain>
    </source>
</reference>
<name>SET5_YEAS7</name>
<accession>A6ZTB4</accession>
<comment type="function">
    <text evidence="1">Histone methyltransferase that monomethylates 'Lys-5', 'Lys-8' and 'Lys-12' of histone H4 (H4K5me1, H4K8me1 and H4K12me1, respectively), thereby controlling gene expression and remodeling chromatin structures.</text>
</comment>
<comment type="catalytic activity">
    <reaction evidence="1">
        <text>L-lysyl-[histone] + S-adenosyl-L-methionine = N(6)-methyl-L-lysyl-[histone] + S-adenosyl-L-homocysteine + H(+)</text>
        <dbReference type="Rhea" id="RHEA:10024"/>
        <dbReference type="Rhea" id="RHEA-COMP:9845"/>
        <dbReference type="Rhea" id="RHEA-COMP:9846"/>
        <dbReference type="ChEBI" id="CHEBI:15378"/>
        <dbReference type="ChEBI" id="CHEBI:29969"/>
        <dbReference type="ChEBI" id="CHEBI:57856"/>
        <dbReference type="ChEBI" id="CHEBI:59789"/>
        <dbReference type="ChEBI" id="CHEBI:61929"/>
    </reaction>
    <physiologicalReaction direction="left-to-right" evidence="1">
        <dbReference type="Rhea" id="RHEA:10025"/>
    </physiologicalReaction>
</comment>
<comment type="subcellular location">
    <subcellularLocation>
        <location evidence="1">Nucleus</location>
    </subcellularLocation>
    <subcellularLocation>
        <location evidence="1">Chromosome</location>
    </subcellularLocation>
    <subcellularLocation>
        <location evidence="1">Cytoplasm</location>
    </subcellularLocation>
</comment>
<comment type="similarity">
    <text evidence="2">Belongs to the class V-like SAM-binding methyltransferase superfamily. Histone-lysine methyltransferase family. SET5 subfamily.</text>
</comment>